<reference key="1">
    <citation type="journal article" date="2007" name="Environ. Microbiol.">
        <title>Whole-genome analysis of the ammonia-oxidizing bacterium, Nitrosomonas eutropha C91: implications for niche adaptation.</title>
        <authorList>
            <person name="Stein L.Y."/>
            <person name="Arp D.J."/>
            <person name="Berube P.M."/>
            <person name="Chain P.S."/>
            <person name="Hauser L."/>
            <person name="Jetten M.S."/>
            <person name="Klotz M.G."/>
            <person name="Larimer F.W."/>
            <person name="Norton J.M."/>
            <person name="Op den Camp H.J.M."/>
            <person name="Shin M."/>
            <person name="Wei X."/>
        </authorList>
    </citation>
    <scope>NUCLEOTIDE SEQUENCE [LARGE SCALE GENOMIC DNA]</scope>
    <source>
        <strain>DSM 101675 / C91 / Nm57</strain>
    </source>
</reference>
<protein>
    <recommendedName>
        <fullName evidence="1">Leucine--tRNA ligase</fullName>
        <ecNumber evidence="1">6.1.1.4</ecNumber>
    </recommendedName>
    <alternativeName>
        <fullName evidence="1">Leucyl-tRNA synthetase</fullName>
        <shortName evidence="1">LeuRS</shortName>
    </alternativeName>
</protein>
<evidence type="ECO:0000255" key="1">
    <source>
        <dbReference type="HAMAP-Rule" id="MF_00049"/>
    </source>
</evidence>
<accession>Q0AG57</accession>
<feature type="chain" id="PRO_1000009378" description="Leucine--tRNA ligase">
    <location>
        <begin position="1"/>
        <end position="868"/>
    </location>
</feature>
<feature type="short sequence motif" description="'HIGH' region">
    <location>
        <begin position="42"/>
        <end position="52"/>
    </location>
</feature>
<feature type="short sequence motif" description="'KMSKS' region">
    <location>
        <begin position="624"/>
        <end position="628"/>
    </location>
</feature>
<feature type="binding site" evidence="1">
    <location>
        <position position="627"/>
    </location>
    <ligand>
        <name>ATP</name>
        <dbReference type="ChEBI" id="CHEBI:30616"/>
    </ligand>
</feature>
<keyword id="KW-0030">Aminoacyl-tRNA synthetase</keyword>
<keyword id="KW-0067">ATP-binding</keyword>
<keyword id="KW-0963">Cytoplasm</keyword>
<keyword id="KW-0436">Ligase</keyword>
<keyword id="KW-0547">Nucleotide-binding</keyword>
<keyword id="KW-0648">Protein biosynthesis</keyword>
<organism>
    <name type="scientific">Nitrosomonas eutropha (strain DSM 101675 / C91 / Nm57)</name>
    <dbReference type="NCBI Taxonomy" id="335283"/>
    <lineage>
        <taxon>Bacteria</taxon>
        <taxon>Pseudomonadati</taxon>
        <taxon>Pseudomonadota</taxon>
        <taxon>Betaproteobacteria</taxon>
        <taxon>Nitrosomonadales</taxon>
        <taxon>Nitrosomonadaceae</taxon>
        <taxon>Nitrosomonas</taxon>
    </lineage>
</organism>
<comment type="catalytic activity">
    <reaction evidence="1">
        <text>tRNA(Leu) + L-leucine + ATP = L-leucyl-tRNA(Leu) + AMP + diphosphate</text>
        <dbReference type="Rhea" id="RHEA:11688"/>
        <dbReference type="Rhea" id="RHEA-COMP:9613"/>
        <dbReference type="Rhea" id="RHEA-COMP:9622"/>
        <dbReference type="ChEBI" id="CHEBI:30616"/>
        <dbReference type="ChEBI" id="CHEBI:33019"/>
        <dbReference type="ChEBI" id="CHEBI:57427"/>
        <dbReference type="ChEBI" id="CHEBI:78442"/>
        <dbReference type="ChEBI" id="CHEBI:78494"/>
        <dbReference type="ChEBI" id="CHEBI:456215"/>
        <dbReference type="EC" id="6.1.1.4"/>
    </reaction>
</comment>
<comment type="subcellular location">
    <subcellularLocation>
        <location evidence="1">Cytoplasm</location>
    </subcellularLocation>
</comment>
<comment type="similarity">
    <text evidence="1">Belongs to the class-I aminoacyl-tRNA synthetase family.</text>
</comment>
<dbReference type="EC" id="6.1.1.4" evidence="1"/>
<dbReference type="EMBL" id="CP000450">
    <property type="protein sequence ID" value="ABI59675.1"/>
    <property type="molecule type" value="Genomic_DNA"/>
</dbReference>
<dbReference type="RefSeq" id="WP_011634481.1">
    <property type="nucleotide sequence ID" value="NC_008344.1"/>
</dbReference>
<dbReference type="SMR" id="Q0AG57"/>
<dbReference type="STRING" id="335283.Neut_1429"/>
<dbReference type="KEGG" id="net:Neut_1429"/>
<dbReference type="eggNOG" id="COG0495">
    <property type="taxonomic scope" value="Bacteria"/>
</dbReference>
<dbReference type="HOGENOM" id="CLU_004427_0_0_4"/>
<dbReference type="OrthoDB" id="9810365at2"/>
<dbReference type="Proteomes" id="UP000001966">
    <property type="component" value="Chromosome"/>
</dbReference>
<dbReference type="GO" id="GO:0005829">
    <property type="term" value="C:cytosol"/>
    <property type="evidence" value="ECO:0007669"/>
    <property type="project" value="TreeGrafter"/>
</dbReference>
<dbReference type="GO" id="GO:0002161">
    <property type="term" value="F:aminoacyl-tRNA deacylase activity"/>
    <property type="evidence" value="ECO:0007669"/>
    <property type="project" value="InterPro"/>
</dbReference>
<dbReference type="GO" id="GO:0005524">
    <property type="term" value="F:ATP binding"/>
    <property type="evidence" value="ECO:0007669"/>
    <property type="project" value="UniProtKB-UniRule"/>
</dbReference>
<dbReference type="GO" id="GO:0004823">
    <property type="term" value="F:leucine-tRNA ligase activity"/>
    <property type="evidence" value="ECO:0007669"/>
    <property type="project" value="UniProtKB-UniRule"/>
</dbReference>
<dbReference type="GO" id="GO:0006429">
    <property type="term" value="P:leucyl-tRNA aminoacylation"/>
    <property type="evidence" value="ECO:0007669"/>
    <property type="project" value="UniProtKB-UniRule"/>
</dbReference>
<dbReference type="CDD" id="cd07958">
    <property type="entry name" value="Anticodon_Ia_Leu_BEm"/>
    <property type="match status" value="1"/>
</dbReference>
<dbReference type="CDD" id="cd00812">
    <property type="entry name" value="LeuRS_core"/>
    <property type="match status" value="1"/>
</dbReference>
<dbReference type="FunFam" id="3.10.20.590:FF:000001">
    <property type="entry name" value="Leucine--tRNA ligase"/>
    <property type="match status" value="1"/>
</dbReference>
<dbReference type="FunFam" id="3.40.50.620:FF:000003">
    <property type="entry name" value="Leucine--tRNA ligase"/>
    <property type="match status" value="1"/>
</dbReference>
<dbReference type="FunFam" id="3.40.50.620:FF:000124">
    <property type="entry name" value="Leucine--tRNA ligase"/>
    <property type="match status" value="1"/>
</dbReference>
<dbReference type="FunFam" id="3.90.740.10:FF:000012">
    <property type="entry name" value="Leucine--tRNA ligase"/>
    <property type="match status" value="1"/>
</dbReference>
<dbReference type="FunFam" id="1.10.730.10:FF:000011">
    <property type="entry name" value="Leucine--tRNA ligase chloroplastic/mitochondrial"/>
    <property type="match status" value="1"/>
</dbReference>
<dbReference type="Gene3D" id="2.20.28.290">
    <property type="match status" value="1"/>
</dbReference>
<dbReference type="Gene3D" id="3.10.20.590">
    <property type="match status" value="1"/>
</dbReference>
<dbReference type="Gene3D" id="3.40.50.620">
    <property type="entry name" value="HUPs"/>
    <property type="match status" value="2"/>
</dbReference>
<dbReference type="Gene3D" id="1.10.730.10">
    <property type="entry name" value="Isoleucyl-tRNA Synthetase, Domain 1"/>
    <property type="match status" value="1"/>
</dbReference>
<dbReference type="HAMAP" id="MF_00049_B">
    <property type="entry name" value="Leu_tRNA_synth_B"/>
    <property type="match status" value="1"/>
</dbReference>
<dbReference type="InterPro" id="IPR001412">
    <property type="entry name" value="aa-tRNA-synth_I_CS"/>
</dbReference>
<dbReference type="InterPro" id="IPR002300">
    <property type="entry name" value="aa-tRNA-synth_Ia"/>
</dbReference>
<dbReference type="InterPro" id="IPR002302">
    <property type="entry name" value="Leu-tRNA-ligase"/>
</dbReference>
<dbReference type="InterPro" id="IPR025709">
    <property type="entry name" value="Leu_tRNA-synth_edit"/>
</dbReference>
<dbReference type="InterPro" id="IPR013155">
    <property type="entry name" value="M/V/L/I-tRNA-synth_anticd-bd"/>
</dbReference>
<dbReference type="InterPro" id="IPR015413">
    <property type="entry name" value="Methionyl/Leucyl_tRNA_Synth"/>
</dbReference>
<dbReference type="InterPro" id="IPR014729">
    <property type="entry name" value="Rossmann-like_a/b/a_fold"/>
</dbReference>
<dbReference type="InterPro" id="IPR009080">
    <property type="entry name" value="tRNAsynth_Ia_anticodon-bd"/>
</dbReference>
<dbReference type="InterPro" id="IPR009008">
    <property type="entry name" value="Val/Leu/Ile-tRNA-synth_edit"/>
</dbReference>
<dbReference type="NCBIfam" id="TIGR00396">
    <property type="entry name" value="leuS_bact"/>
    <property type="match status" value="1"/>
</dbReference>
<dbReference type="PANTHER" id="PTHR43740:SF2">
    <property type="entry name" value="LEUCINE--TRNA LIGASE, MITOCHONDRIAL"/>
    <property type="match status" value="1"/>
</dbReference>
<dbReference type="PANTHER" id="PTHR43740">
    <property type="entry name" value="LEUCYL-TRNA SYNTHETASE"/>
    <property type="match status" value="1"/>
</dbReference>
<dbReference type="Pfam" id="PF08264">
    <property type="entry name" value="Anticodon_1"/>
    <property type="match status" value="1"/>
</dbReference>
<dbReference type="Pfam" id="PF00133">
    <property type="entry name" value="tRNA-synt_1"/>
    <property type="match status" value="2"/>
</dbReference>
<dbReference type="Pfam" id="PF13603">
    <property type="entry name" value="tRNA-synt_1_2"/>
    <property type="match status" value="1"/>
</dbReference>
<dbReference type="Pfam" id="PF09334">
    <property type="entry name" value="tRNA-synt_1g"/>
    <property type="match status" value="1"/>
</dbReference>
<dbReference type="PRINTS" id="PR00985">
    <property type="entry name" value="TRNASYNTHLEU"/>
</dbReference>
<dbReference type="SUPFAM" id="SSF47323">
    <property type="entry name" value="Anticodon-binding domain of a subclass of class I aminoacyl-tRNA synthetases"/>
    <property type="match status" value="1"/>
</dbReference>
<dbReference type="SUPFAM" id="SSF52374">
    <property type="entry name" value="Nucleotidylyl transferase"/>
    <property type="match status" value="1"/>
</dbReference>
<dbReference type="SUPFAM" id="SSF50677">
    <property type="entry name" value="ValRS/IleRS/LeuRS editing domain"/>
    <property type="match status" value="1"/>
</dbReference>
<dbReference type="PROSITE" id="PS00178">
    <property type="entry name" value="AA_TRNA_LIGASE_I"/>
    <property type="match status" value="1"/>
</dbReference>
<proteinExistence type="inferred from homology"/>
<gene>
    <name evidence="1" type="primary">leuS</name>
    <name type="ordered locus">Neut_1429</name>
</gene>
<sequence length="868" mass="98169">MQEKYHPQEIEQQARQSWQETGIFNTTEIPDKPKYYCLSMFPYPSGKLHMGHVRNYTIGDVLSRYRRMQGYNVMQPMGWDAFGLPAENAAIQKGVPPAKWTYDNIAYMRSQLQSLGLAIDWKRELATCDPEYYRWNQWLFLRMLEKGIAYQKTQVVNWDPVDQTVLANEQVIDGCGWRTGAVVEKREIPGYYLAITRYADELLAGLENLPGWPERVKAMQANWIGKSYGVDIIFSPDIASGMPQALKVFTTRADTLMGATYVAVAAEHPVALYAAQNQPKLAAFIESCRQGATMEAELALQEKKGMATGLYVLHPLTGERLPVWVANYVLMSYGEGAVMAVPAHDERDFDFARQYALPIRPVIKPEDGELPAPLAQAFTGYGVTFDSGEFSSLKSMDAVDAIATKLKLEEQGEKRVRYRLRDWGISRQRYWGCPIPLVHCDQCGVVPVPDDQLPVTLPEDLVPDGSGNPLTKTPSFYECTCPRCGQQAHRETDTMDTFVDSSWYFIRYACQDQQAAMTDQRANYWLPVDQYIGGIEHAILHLLYSRFWSKVMRDLGLVSFDEPFANLLTQGMVLNEIFFRKTGNGRIQYFNPVEVDVQYDAEGKKIGAVLQADGQPVESGGIGTMSKSKNNGIDPQEIIEQYGADTARLFMMFASPPTQTLEWSDAGVEGAFRFLKRLWRQVYLHRQQGSDMSATDAIPHLEYPADLRDLRCQLHQTIVKVTDDLERRHTFNTAIAAVMELMNKLAGVQDISPAARQLMQEALENSVLLLSPIVPHICHILWRELRPGTELLDQPWPQADEQALIQDEIEIVVQINGKLRGQIRIAREADQATIERIALEHEHVQRNIAGQPIRKVVIVPGRLVNIVV</sequence>
<name>SYL_NITEC</name>